<organism>
    <name type="scientific">Clostridium novyi (strain NT)</name>
    <dbReference type="NCBI Taxonomy" id="386415"/>
    <lineage>
        <taxon>Bacteria</taxon>
        <taxon>Bacillati</taxon>
        <taxon>Bacillota</taxon>
        <taxon>Clostridia</taxon>
        <taxon>Eubacteriales</taxon>
        <taxon>Clostridiaceae</taxon>
        <taxon>Clostridium</taxon>
    </lineage>
</organism>
<feature type="chain" id="PRO_1000078605" description="Porphobilinogen deaminase">
    <location>
        <begin position="1"/>
        <end position="300"/>
    </location>
</feature>
<feature type="modified residue" description="S-(dipyrrolylmethanemethyl)cysteine" evidence="1">
    <location>
        <position position="243"/>
    </location>
</feature>
<accession>A0Q2B1</accession>
<keyword id="KW-0627">Porphyrin biosynthesis</keyword>
<keyword id="KW-1185">Reference proteome</keyword>
<keyword id="KW-0808">Transferase</keyword>
<proteinExistence type="inferred from homology"/>
<name>HEM3_CLONN</name>
<protein>
    <recommendedName>
        <fullName evidence="1">Porphobilinogen deaminase</fullName>
        <shortName evidence="1">PBG</shortName>
        <ecNumber evidence="1">2.5.1.61</ecNumber>
    </recommendedName>
    <alternativeName>
        <fullName evidence="1">Hydroxymethylbilane synthase</fullName>
        <shortName evidence="1">HMBS</shortName>
    </alternativeName>
    <alternativeName>
        <fullName evidence="1">Pre-uroporphyrinogen synthase</fullName>
    </alternativeName>
</protein>
<reference key="1">
    <citation type="journal article" date="2006" name="Nat. Biotechnol.">
        <title>The genome and transcriptomes of the anti-tumor agent Clostridium novyi-NT.</title>
        <authorList>
            <person name="Bettegowda C."/>
            <person name="Huang X."/>
            <person name="Lin J."/>
            <person name="Cheong I."/>
            <person name="Kohli M."/>
            <person name="Szabo S.A."/>
            <person name="Zhang X."/>
            <person name="Diaz L.A. Jr."/>
            <person name="Velculescu V.E."/>
            <person name="Parmigiani G."/>
            <person name="Kinzler K.W."/>
            <person name="Vogelstein B."/>
            <person name="Zhou S."/>
        </authorList>
    </citation>
    <scope>NUCLEOTIDE SEQUENCE [LARGE SCALE GENOMIC DNA]</scope>
    <source>
        <strain>NT</strain>
    </source>
</reference>
<dbReference type="EC" id="2.5.1.61" evidence="1"/>
<dbReference type="EMBL" id="CP000382">
    <property type="protein sequence ID" value="ABK62075.1"/>
    <property type="molecule type" value="Genomic_DNA"/>
</dbReference>
<dbReference type="RefSeq" id="WP_011722750.1">
    <property type="nucleotide sequence ID" value="NC_008593.1"/>
</dbReference>
<dbReference type="SMR" id="A0Q2B1"/>
<dbReference type="STRING" id="386415.NT01CX_0262"/>
<dbReference type="KEGG" id="cno:NT01CX_0262"/>
<dbReference type="PATRIC" id="fig|386415.7.peg.1798"/>
<dbReference type="eggNOG" id="COG0181">
    <property type="taxonomic scope" value="Bacteria"/>
</dbReference>
<dbReference type="HOGENOM" id="CLU_019704_0_2_9"/>
<dbReference type="UniPathway" id="UPA00251">
    <property type="reaction ID" value="UER00319"/>
</dbReference>
<dbReference type="Proteomes" id="UP000008220">
    <property type="component" value="Chromosome"/>
</dbReference>
<dbReference type="GO" id="GO:0005737">
    <property type="term" value="C:cytoplasm"/>
    <property type="evidence" value="ECO:0007669"/>
    <property type="project" value="TreeGrafter"/>
</dbReference>
<dbReference type="GO" id="GO:0004418">
    <property type="term" value="F:hydroxymethylbilane synthase activity"/>
    <property type="evidence" value="ECO:0007669"/>
    <property type="project" value="UniProtKB-UniRule"/>
</dbReference>
<dbReference type="GO" id="GO:0006782">
    <property type="term" value="P:protoporphyrinogen IX biosynthetic process"/>
    <property type="evidence" value="ECO:0007669"/>
    <property type="project" value="UniProtKB-UniRule"/>
</dbReference>
<dbReference type="FunFam" id="3.40.190.10:FF:000004">
    <property type="entry name" value="Porphobilinogen deaminase"/>
    <property type="match status" value="1"/>
</dbReference>
<dbReference type="FunFam" id="3.40.190.10:FF:000005">
    <property type="entry name" value="Porphobilinogen deaminase"/>
    <property type="match status" value="1"/>
</dbReference>
<dbReference type="Gene3D" id="3.40.190.10">
    <property type="entry name" value="Periplasmic binding protein-like II"/>
    <property type="match status" value="2"/>
</dbReference>
<dbReference type="Gene3D" id="3.30.160.40">
    <property type="entry name" value="Porphobilinogen deaminase, C-terminal domain"/>
    <property type="match status" value="1"/>
</dbReference>
<dbReference type="HAMAP" id="MF_00260">
    <property type="entry name" value="Porphobil_deam"/>
    <property type="match status" value="1"/>
</dbReference>
<dbReference type="InterPro" id="IPR000860">
    <property type="entry name" value="HemC"/>
</dbReference>
<dbReference type="InterPro" id="IPR022419">
    <property type="entry name" value="Porphobilin_deaminase_cofac_BS"/>
</dbReference>
<dbReference type="InterPro" id="IPR022417">
    <property type="entry name" value="Porphobilin_deaminase_N"/>
</dbReference>
<dbReference type="InterPro" id="IPR022418">
    <property type="entry name" value="Porphobilinogen_deaminase_C"/>
</dbReference>
<dbReference type="InterPro" id="IPR036803">
    <property type="entry name" value="Porphobilinogen_deaminase_C_sf"/>
</dbReference>
<dbReference type="NCBIfam" id="TIGR00212">
    <property type="entry name" value="hemC"/>
    <property type="match status" value="1"/>
</dbReference>
<dbReference type="PANTHER" id="PTHR11557">
    <property type="entry name" value="PORPHOBILINOGEN DEAMINASE"/>
    <property type="match status" value="1"/>
</dbReference>
<dbReference type="PANTHER" id="PTHR11557:SF0">
    <property type="entry name" value="PORPHOBILINOGEN DEAMINASE"/>
    <property type="match status" value="1"/>
</dbReference>
<dbReference type="Pfam" id="PF01379">
    <property type="entry name" value="Porphobil_deam"/>
    <property type="match status" value="1"/>
</dbReference>
<dbReference type="Pfam" id="PF03900">
    <property type="entry name" value="Porphobil_deamC"/>
    <property type="match status" value="1"/>
</dbReference>
<dbReference type="PIRSF" id="PIRSF001438">
    <property type="entry name" value="4pyrrol_synth_OHMeBilane_synth"/>
    <property type="match status" value="1"/>
</dbReference>
<dbReference type="PRINTS" id="PR00151">
    <property type="entry name" value="PORPHBDMNASE"/>
</dbReference>
<dbReference type="SUPFAM" id="SSF53850">
    <property type="entry name" value="Periplasmic binding protein-like II"/>
    <property type="match status" value="1"/>
</dbReference>
<dbReference type="SUPFAM" id="SSF54782">
    <property type="entry name" value="Porphobilinogen deaminase (hydroxymethylbilane synthase), C-terminal domain"/>
    <property type="match status" value="1"/>
</dbReference>
<dbReference type="PROSITE" id="PS00533">
    <property type="entry name" value="PORPHOBILINOGEN_DEAM"/>
    <property type="match status" value="1"/>
</dbReference>
<comment type="function">
    <text evidence="1">Tetrapolymerization of the monopyrrole PBG into the hydroxymethylbilane pre-uroporphyrinogen in several discrete steps.</text>
</comment>
<comment type="catalytic activity">
    <reaction evidence="1">
        <text>4 porphobilinogen + H2O = hydroxymethylbilane + 4 NH4(+)</text>
        <dbReference type="Rhea" id="RHEA:13185"/>
        <dbReference type="ChEBI" id="CHEBI:15377"/>
        <dbReference type="ChEBI" id="CHEBI:28938"/>
        <dbReference type="ChEBI" id="CHEBI:57845"/>
        <dbReference type="ChEBI" id="CHEBI:58126"/>
        <dbReference type="EC" id="2.5.1.61"/>
    </reaction>
</comment>
<comment type="cofactor">
    <cofactor evidence="1">
        <name>dipyrromethane</name>
        <dbReference type="ChEBI" id="CHEBI:60342"/>
    </cofactor>
    <text evidence="1">Binds 1 dipyrromethane group covalently.</text>
</comment>
<comment type="pathway">
    <text evidence="1">Porphyrin-containing compound metabolism; protoporphyrin-IX biosynthesis; coproporphyrinogen-III from 5-aminolevulinate: step 2/4.</text>
</comment>
<comment type="subunit">
    <text evidence="1">Monomer.</text>
</comment>
<comment type="miscellaneous">
    <text evidence="1">The porphobilinogen subunits are added to the dipyrromethane group.</text>
</comment>
<comment type="similarity">
    <text evidence="1">Belongs to the HMBS family.</text>
</comment>
<sequence length="300" mass="33920">MKIVVGSRGSKLALTQTNWVIDKIKQKYPQIQFEVKIISTKGDRIQHIALDKIGDKGLFVKEIEEQLISGDIDMAVHSMKDMSTEMPEELKFSYVPKREDYRDVLILNKKYNSIDELPMNAKIGTGSKRRKYQLLQYRDDLNIVPIRGNVETRINKIEMENLHGVVLASAGIKRLNIQEKLDYNIFYLNEDIMLPSPAQGILALEIRKDREDLEEILKSIEDKNSSIQAVAERAFLKGVNGGCHVPIGAICNINKDNVELTGLLGKEDGSKIIRKSLGGKIEDAEKIGYELAEIVLKEIN</sequence>
<gene>
    <name evidence="1" type="primary">hemC</name>
    <name type="ordered locus">NT01CX_0262</name>
</gene>
<evidence type="ECO:0000255" key="1">
    <source>
        <dbReference type="HAMAP-Rule" id="MF_00260"/>
    </source>
</evidence>